<dbReference type="EMBL" id="FO081257">
    <property type="protein sequence ID" value="CCD70246.1"/>
    <property type="molecule type" value="Genomic_DNA"/>
</dbReference>
<dbReference type="RefSeq" id="NP_499878.3">
    <property type="nucleotide sequence ID" value="NM_067477.5"/>
</dbReference>
<dbReference type="SMR" id="Q9N425"/>
<dbReference type="BioGRID" id="41997">
    <property type="interactions" value="21"/>
</dbReference>
<dbReference type="ComplexPortal" id="CPX-3386">
    <property type="entry name" value="COP9 signalosome complex"/>
</dbReference>
<dbReference type="FunCoup" id="Q9N425">
    <property type="interactions" value="2107"/>
</dbReference>
<dbReference type="IntAct" id="Q9N425">
    <property type="interactions" value="2"/>
</dbReference>
<dbReference type="STRING" id="6239.Y38C1AA.2.1"/>
<dbReference type="PaxDb" id="6239-Y38C1AA.2"/>
<dbReference type="PeptideAtlas" id="Q9N425"/>
<dbReference type="EnsemblMetazoa" id="Y38C1AA.2.1">
    <property type="protein sequence ID" value="Y38C1AA.2.1"/>
    <property type="gene ID" value="WBGene00000815"/>
</dbReference>
<dbReference type="GeneID" id="176834"/>
<dbReference type="KEGG" id="cel:CELE_Y38C1AA.2"/>
<dbReference type="UCSC" id="Y38C1AA.2">
    <property type="organism name" value="c. elegans"/>
</dbReference>
<dbReference type="AGR" id="WB:WBGene00000815"/>
<dbReference type="CTD" id="176834"/>
<dbReference type="WormBase" id="Y38C1AA.2">
    <property type="protein sequence ID" value="CE33861"/>
    <property type="gene ID" value="WBGene00000815"/>
    <property type="gene designation" value="csn-3"/>
</dbReference>
<dbReference type="eggNOG" id="KOG2582">
    <property type="taxonomic scope" value="Eukaryota"/>
</dbReference>
<dbReference type="HOGENOM" id="CLU_562892_0_0_1"/>
<dbReference type="InParanoid" id="Q9N425"/>
<dbReference type="OMA" id="CFPANED"/>
<dbReference type="OrthoDB" id="29061at2759"/>
<dbReference type="PhylomeDB" id="Q9N425"/>
<dbReference type="Reactome" id="R-CEL-5696394">
    <property type="pathway name" value="DNA Damage Recognition in GG-NER"/>
</dbReference>
<dbReference type="Reactome" id="R-CEL-6781823">
    <property type="pathway name" value="Formation of TC-NER Pre-Incision Complex"/>
</dbReference>
<dbReference type="Reactome" id="R-CEL-8856825">
    <property type="pathway name" value="Cargo recognition for clathrin-mediated endocytosis"/>
</dbReference>
<dbReference type="Reactome" id="R-CEL-8951664">
    <property type="pathway name" value="Neddylation"/>
</dbReference>
<dbReference type="PRO" id="PR:Q9N425"/>
<dbReference type="Proteomes" id="UP000001940">
    <property type="component" value="Chromosome IV"/>
</dbReference>
<dbReference type="Bgee" id="WBGene00000815">
    <property type="expression patterns" value="Expressed in germ line (C elegans) and 4 other cell types or tissues"/>
</dbReference>
<dbReference type="GO" id="GO:0008180">
    <property type="term" value="C:COP9 signalosome"/>
    <property type="evidence" value="ECO:0000353"/>
    <property type="project" value="WormBase"/>
</dbReference>
<dbReference type="GO" id="GO:0005737">
    <property type="term" value="C:cytoplasm"/>
    <property type="evidence" value="ECO:0000303"/>
    <property type="project" value="ComplexPortal"/>
</dbReference>
<dbReference type="GO" id="GO:0005634">
    <property type="term" value="C:nucleus"/>
    <property type="evidence" value="ECO:0000303"/>
    <property type="project" value="ComplexPortal"/>
</dbReference>
<dbReference type="GO" id="GO:0060184">
    <property type="term" value="P:cell cycle switching"/>
    <property type="evidence" value="ECO:0000315"/>
    <property type="project" value="ComplexPortal"/>
</dbReference>
<dbReference type="GO" id="GO:0040001">
    <property type="term" value="P:establishment of mitotic spindle localization"/>
    <property type="evidence" value="ECO:0000315"/>
    <property type="project" value="WormBase"/>
</dbReference>
<dbReference type="GO" id="GO:0000281">
    <property type="term" value="P:mitotic cytokinesis"/>
    <property type="evidence" value="ECO:0000315"/>
    <property type="project" value="WormBase"/>
</dbReference>
<dbReference type="GO" id="GO:0048477">
    <property type="term" value="P:oogenesis"/>
    <property type="evidence" value="ECO:0007669"/>
    <property type="project" value="UniProtKB-KW"/>
</dbReference>
<dbReference type="GO" id="GO:1905879">
    <property type="term" value="P:regulation of oogenesis"/>
    <property type="evidence" value="ECO:0000315"/>
    <property type="project" value="ComplexPortal"/>
</dbReference>
<dbReference type="GO" id="GO:0006511">
    <property type="term" value="P:ubiquitin-dependent protein catabolic process"/>
    <property type="evidence" value="ECO:0000314"/>
    <property type="project" value="WormBase"/>
</dbReference>
<dbReference type="InterPro" id="IPR055089">
    <property type="entry name" value="COP9_N"/>
</dbReference>
<dbReference type="InterPro" id="IPR050756">
    <property type="entry name" value="CSN3"/>
</dbReference>
<dbReference type="InterPro" id="IPR000717">
    <property type="entry name" value="PCI_dom"/>
</dbReference>
<dbReference type="PANTHER" id="PTHR10758">
    <property type="entry name" value="26S PROTEASOME NON-ATPASE REGULATORY SUBUNIT 3/COP9 SIGNALOSOME COMPLEX SUBUNIT 3"/>
    <property type="match status" value="1"/>
</dbReference>
<dbReference type="PANTHER" id="PTHR10758:SF1">
    <property type="entry name" value="COP9 SIGNALOSOME COMPLEX SUBUNIT 3"/>
    <property type="match status" value="1"/>
</dbReference>
<dbReference type="Pfam" id="PF22788">
    <property type="entry name" value="COP9_hel_rpt"/>
    <property type="match status" value="1"/>
</dbReference>
<dbReference type="Pfam" id="PF01399">
    <property type="entry name" value="PCI"/>
    <property type="match status" value="1"/>
</dbReference>
<dbReference type="PROSITE" id="PS50250">
    <property type="entry name" value="PCI"/>
    <property type="match status" value="1"/>
</dbReference>
<name>CSN3_CAEEL</name>
<protein>
    <recommendedName>
        <fullName>COP9 signalosome complex subunit 3</fullName>
        <shortName>Signalosome subunit 3</shortName>
    </recommendedName>
</protein>
<feature type="chain" id="PRO_0000120982" description="COP9 signalosome complex subunit 3">
    <location>
        <begin position="1"/>
        <end position="501"/>
    </location>
</feature>
<feature type="domain" description="PCI" evidence="1">
    <location>
        <begin position="275"/>
        <end position="445"/>
    </location>
</feature>
<sequence length="501" mass="55884">MTTFFNKLFTGASSSSSAAASSGMDLGSMESLCAAINELCSEKHVSENVGELAAGIVRKNKELFEKKSNDVEAFLLHCSPNVGSAAMVAAIKGMFDTSAAKNNETGTDRAVELLNHYVDENNFVGGHLKLVPEIIFPLLRDVGLYCLEKKNKPEIGQRIIMKALGSMFPRNGSNAPNVLTSAHGVLFACALETKDYASVEPFIDLHVDEIANENCIQDQEKSDNRERDFGDVFLGRMKKGAAFGSQPVAHNPHLHPKYVLDYLYNGACILIELKRFEDALFLLEICVGMPAFSVQDQHLDSFKKYVLISLILKGKVDVTENGDKSAIRHFKTKSPEYKQFSEIRFSRSSNTHSAVESLVKSAKDRLRKDGNTEIAKYLVVEMKKKTIMSLTRMFTSIRISEIEELAFLKSRDQVTELIGQLVEEQRITVRIDGDMVFWTELSPVPSKNDVENKIRIVDHLNTLLHEKNTTMKAGSGRMRPSVMYNEDEGLSMPPTESKFFS</sequence>
<keyword id="KW-0963">Cytoplasm</keyword>
<keyword id="KW-0217">Developmental protein</keyword>
<keyword id="KW-0221">Differentiation</keyword>
<keyword id="KW-0539">Nucleus</keyword>
<keyword id="KW-0896">Oogenesis</keyword>
<keyword id="KW-1185">Reference proteome</keyword>
<keyword id="KW-0736">Signalosome</keyword>
<evidence type="ECO:0000255" key="1">
    <source>
        <dbReference type="PROSITE-ProRule" id="PRU01185"/>
    </source>
</evidence>
<evidence type="ECO:0000269" key="2">
    <source>
    </source>
</evidence>
<evidence type="ECO:0000305" key="3"/>
<gene>
    <name type="primary">csn-3</name>
    <name type="ORF">Y38C1AA.2</name>
</gene>
<comment type="function">
    <text evidence="2">Component of the COP9 signalosome complex (CSN), a complex involved in various cellular and developmental processes. The CSN complex is an essential regulator of the ubiquitin (Ubl) conjugation pathway by mediating the deneddylation of the cullin subunits of the SCF-type E3 ligase complexes, leading to decrease the Ubl ligase activity of SCF. The CSN complex plays an essential role in embryogenesis and oogenesis and is required to regulate microtubule stability in the early embryo. Mediates mei-3/katanin targeting for degradation at the meiosis to mitosis transition via deneddylation of cul-3.</text>
</comment>
<comment type="subunit">
    <text evidence="2">Component of the CSN complex, probably composed of csn-1, csn-2, csn-3, csn-4, csn-5, csn-6 and csn-7. Within the complex it probably interacts directly with csn-2 and csn-4. May interact with itself.</text>
</comment>
<comment type="subcellular location">
    <subcellularLocation>
        <location evidence="2">Cytoplasm</location>
    </subcellularLocation>
    <subcellularLocation>
        <location evidence="2">Nucleus</location>
    </subcellularLocation>
</comment>
<comment type="similarity">
    <text evidence="3">Belongs to the CSN3 family.</text>
</comment>
<organism>
    <name type="scientific">Caenorhabditis elegans</name>
    <dbReference type="NCBI Taxonomy" id="6239"/>
    <lineage>
        <taxon>Eukaryota</taxon>
        <taxon>Metazoa</taxon>
        <taxon>Ecdysozoa</taxon>
        <taxon>Nematoda</taxon>
        <taxon>Chromadorea</taxon>
        <taxon>Rhabditida</taxon>
        <taxon>Rhabditina</taxon>
        <taxon>Rhabditomorpha</taxon>
        <taxon>Rhabditoidea</taxon>
        <taxon>Rhabditidae</taxon>
        <taxon>Peloderinae</taxon>
        <taxon>Caenorhabditis</taxon>
    </lineage>
</organism>
<proteinExistence type="evidence at protein level"/>
<accession>Q9N425</accession>
<reference key="1">
    <citation type="journal article" date="1998" name="Science">
        <title>Genome sequence of the nematode C. elegans: a platform for investigating biology.</title>
        <authorList>
            <consortium name="The C. elegans sequencing consortium"/>
        </authorList>
    </citation>
    <scope>NUCLEOTIDE SEQUENCE [LARGE SCALE GENOMIC DNA]</scope>
    <source>
        <strain>Bristol N2</strain>
    </source>
</reference>
<reference key="2">
    <citation type="journal article" date="2003" name="Curr. Biol.">
        <title>Neddylation and deneddylation of CUL-3 is required to target MEI-1/katanin for degradation at the meiosis-to-mitosis transition in C. elegans.</title>
        <authorList>
            <person name="Pintard L."/>
            <person name="Kurz T."/>
            <person name="Glaser S."/>
            <person name="Willis J.H."/>
            <person name="Peter M."/>
            <person name="Bowerman B."/>
        </authorList>
    </citation>
    <scope>FUNCTION</scope>
    <scope>SUBCELLULAR LOCATION</scope>
    <scope>INTERACTION WITH CSN-2 AND CSN-4</scope>
</reference>